<accession>G5EDQ9</accession>
<comment type="function">
    <text evidence="5 6">Probably not involved in maintaining the position of ASI and ASH head neuron cell bodies and ventral nerve cord axons of PVQ, PVP, RMEV, AVK and HSN neurons.</text>
</comment>
<comment type="subcellular location">
    <subcellularLocation>
        <location evidence="1">Secreted</location>
    </subcellularLocation>
</comment>
<comment type="tissue specificity">
    <text evidence="4">Expressed in PVT neurons and weakly in some head neurons.</text>
</comment>
<comment type="developmental stage">
    <text evidence="4">Expression begins at the late L1 larval stage.</text>
</comment>
<comment type="disruption phenotype">
    <text evidence="5 6">No visible phenotype (PubMed:19737747, PubMed:22829780). No defect in the positioning of ASI and ASH neuron cell bodies (PubMed:22829780). No defect in the positioning of PQV, PVP, RMEV, HSN and AVK axons in the ventral nerve cord (PubMed:19737747). In a zig-1, zig-3, zig-4 or zig-5 or zig-8 mutant background, cell body positioning of ASI and ASH head neurons is normal (PubMed:22829780).</text>
</comment>
<organism evidence="10">
    <name type="scientific">Caenorhabditis elegans</name>
    <dbReference type="NCBI Taxonomy" id="6239"/>
    <lineage>
        <taxon>Eukaryota</taxon>
        <taxon>Metazoa</taxon>
        <taxon>Ecdysozoa</taxon>
        <taxon>Nematoda</taxon>
        <taxon>Chromadorea</taxon>
        <taxon>Rhabditida</taxon>
        <taxon>Rhabditina</taxon>
        <taxon>Rhabditomorpha</taxon>
        <taxon>Rhabditoidea</taxon>
        <taxon>Rhabditidae</taxon>
        <taxon>Peloderinae</taxon>
        <taxon>Caenorhabditis</taxon>
    </lineage>
</organism>
<evidence type="ECO:0000255" key="1"/>
<evidence type="ECO:0000255" key="2">
    <source>
        <dbReference type="PROSITE-ProRule" id="PRU00114"/>
    </source>
</evidence>
<evidence type="ECO:0000255" key="3">
    <source>
        <dbReference type="PROSITE-ProRule" id="PRU00498"/>
    </source>
</evidence>
<evidence type="ECO:0000269" key="4">
    <source>
    </source>
</evidence>
<evidence type="ECO:0000269" key="5">
    <source>
    </source>
</evidence>
<evidence type="ECO:0000269" key="6">
    <source>
    </source>
</evidence>
<evidence type="ECO:0000303" key="7">
    <source>
    </source>
</evidence>
<evidence type="ECO:0000305" key="8"/>
<evidence type="ECO:0000312" key="9">
    <source>
        <dbReference type="EMBL" id="AAL59607.1"/>
    </source>
</evidence>
<evidence type="ECO:0000312" key="10">
    <source>
        <dbReference type="Proteomes" id="UP000001940"/>
    </source>
</evidence>
<evidence type="ECO:0000312" key="11">
    <source>
        <dbReference type="WormBase" id="F42F12.2"/>
    </source>
</evidence>
<feature type="signal peptide" evidence="1">
    <location>
        <begin position="1"/>
        <end position="17"/>
    </location>
</feature>
<feature type="chain" id="PRO_5007661259" description="Zwei Ig domain protein zig-2">
    <location>
        <begin position="18"/>
        <end position="238"/>
    </location>
</feature>
<feature type="domain" description="Ig-like C2-type 1" evidence="2">
    <location>
        <begin position="31"/>
        <end position="130"/>
    </location>
</feature>
<feature type="domain" description="Ig-like C2-type 2" evidence="2">
    <location>
        <begin position="149"/>
        <end position="230"/>
    </location>
</feature>
<feature type="glycosylation site" description="N-linked (GlcNAc...) asparagine" evidence="3">
    <location>
        <position position="40"/>
    </location>
</feature>
<feature type="glycosylation site" description="N-linked (GlcNAc...) asparagine" evidence="3">
    <location>
        <position position="43"/>
    </location>
</feature>
<feature type="glycosylation site" description="N-linked (GlcNAc...) asparagine" evidence="3">
    <location>
        <position position="137"/>
    </location>
</feature>
<feature type="glycosylation site" description="N-linked (GlcNAc...) asparagine" evidence="3">
    <location>
        <position position="206"/>
    </location>
</feature>
<feature type="glycosylation site" description="N-linked (GlcNAc...) asparagine" evidence="3">
    <location>
        <position position="216"/>
    </location>
</feature>
<feature type="disulfide bond" evidence="2">
    <location>
        <begin position="54"/>
        <end position="117"/>
    </location>
</feature>
<feature type="disulfide bond" evidence="2">
    <location>
        <begin position="170"/>
        <end position="217"/>
    </location>
</feature>
<protein>
    <recommendedName>
        <fullName evidence="7">Zwei Ig domain protein zig-2</fullName>
    </recommendedName>
    <alternativeName>
        <fullName evidence="7">2 Ig domain protein zig-2</fullName>
    </alternativeName>
</protein>
<keyword id="KW-1015">Disulfide bond</keyword>
<keyword id="KW-0325">Glycoprotein</keyword>
<keyword id="KW-0393">Immunoglobulin domain</keyword>
<keyword id="KW-1185">Reference proteome</keyword>
<keyword id="KW-0677">Repeat</keyword>
<keyword id="KW-0964">Secreted</keyword>
<keyword id="KW-0732">Signal</keyword>
<sequence>MLKFTAISFVLLNAAESVDHQKPIRALDSQPLLKFTRTPNDSNVTFGEKFVLSCGANGAPLPSIYWELNGMRIQGEETSNVYENILNDGKQVSNAAMVSSHYRIPCATARNSGAYKCIIDNGLTKLEHVAKVFVGGNKTNCALNDNGAPFISMTVDFRLEISNNAVALSCRSETATEWSWHKGEQLLTNDGERYQMFPSGDLIIRNISWSDMGEYNCTARNHFGETTAITFLYPTLAK</sequence>
<proteinExistence type="evidence at transcript level"/>
<name>ZIG2_CAEEL</name>
<dbReference type="EMBL" id="AF456249">
    <property type="protein sequence ID" value="AAL59607.1"/>
    <property type="molecule type" value="mRNA"/>
</dbReference>
<dbReference type="EMBL" id="BX284606">
    <property type="protein sequence ID" value="CAA92170.1"/>
    <property type="molecule type" value="Genomic_DNA"/>
</dbReference>
<dbReference type="PIR" id="T22098">
    <property type="entry name" value="T22098"/>
</dbReference>
<dbReference type="RefSeq" id="NP_510069.1">
    <property type="nucleotide sequence ID" value="NM_077668.5"/>
</dbReference>
<dbReference type="SMR" id="G5EDQ9"/>
<dbReference type="FunCoup" id="G5EDQ9">
    <property type="interactions" value="725"/>
</dbReference>
<dbReference type="STRING" id="6239.F42F12.2.1"/>
<dbReference type="MEROPS" id="I43.001"/>
<dbReference type="GlyCosmos" id="G5EDQ9">
    <property type="glycosylation" value="5 sites, No reported glycans"/>
</dbReference>
<dbReference type="PaxDb" id="6239-F42F12.2"/>
<dbReference type="EnsemblMetazoa" id="F42F12.2.1">
    <property type="protein sequence ID" value="F42F12.2.1"/>
    <property type="gene ID" value="WBGene00006979"/>
</dbReference>
<dbReference type="GeneID" id="192087"/>
<dbReference type="KEGG" id="cel:CELE_F42F12.2"/>
<dbReference type="AGR" id="WB:WBGene00006979"/>
<dbReference type="CTD" id="192087"/>
<dbReference type="WormBase" id="F42F12.2">
    <property type="protein sequence ID" value="CE03313"/>
    <property type="gene ID" value="WBGene00006979"/>
    <property type="gene designation" value="zig-2"/>
</dbReference>
<dbReference type="eggNOG" id="KOG3510">
    <property type="taxonomic scope" value="Eukaryota"/>
</dbReference>
<dbReference type="GeneTree" id="ENSGT00970000196086"/>
<dbReference type="HOGENOM" id="CLU_072416_1_0_1"/>
<dbReference type="InParanoid" id="G5EDQ9"/>
<dbReference type="OMA" id="WHERVAW"/>
<dbReference type="OrthoDB" id="6138780at2759"/>
<dbReference type="PhylomeDB" id="G5EDQ9"/>
<dbReference type="PRO" id="PR:G5EDQ9"/>
<dbReference type="Proteomes" id="UP000001940">
    <property type="component" value="Chromosome X"/>
</dbReference>
<dbReference type="Bgee" id="WBGene00006979">
    <property type="expression patterns" value="Expressed in adult organism and 1 other cell type or tissue"/>
</dbReference>
<dbReference type="GO" id="GO:0005576">
    <property type="term" value="C:extracellular region"/>
    <property type="evidence" value="ECO:0007669"/>
    <property type="project" value="UniProtKB-SubCell"/>
</dbReference>
<dbReference type="GO" id="GO:0048468">
    <property type="term" value="P:cell development"/>
    <property type="evidence" value="ECO:0007669"/>
    <property type="project" value="UniProtKB-ARBA"/>
</dbReference>
<dbReference type="FunFam" id="2.60.40.10:FF:001749">
    <property type="entry name" value="Neural/ectodermal development factor IMP-L2"/>
    <property type="match status" value="1"/>
</dbReference>
<dbReference type="FunFam" id="2.60.40.10:FF:002402">
    <property type="entry name" value="Zwei Ig domain protein zig-4"/>
    <property type="match status" value="1"/>
</dbReference>
<dbReference type="Gene3D" id="2.60.40.10">
    <property type="entry name" value="Immunoglobulins"/>
    <property type="match status" value="2"/>
</dbReference>
<dbReference type="InterPro" id="IPR007110">
    <property type="entry name" value="Ig-like_dom"/>
</dbReference>
<dbReference type="InterPro" id="IPR036179">
    <property type="entry name" value="Ig-like_dom_sf"/>
</dbReference>
<dbReference type="InterPro" id="IPR013783">
    <property type="entry name" value="Ig-like_fold"/>
</dbReference>
<dbReference type="InterPro" id="IPR013098">
    <property type="entry name" value="Ig_I-set"/>
</dbReference>
<dbReference type="InterPro" id="IPR003599">
    <property type="entry name" value="Ig_sub"/>
</dbReference>
<dbReference type="InterPro" id="IPR003598">
    <property type="entry name" value="Ig_sub2"/>
</dbReference>
<dbReference type="PANTHER" id="PTHR10075">
    <property type="entry name" value="BASIGIN RELATED"/>
    <property type="match status" value="1"/>
</dbReference>
<dbReference type="PANTHER" id="PTHR10075:SF101">
    <property type="entry name" value="ZWEI IG DOMAIN PROTEIN ZIG-3"/>
    <property type="match status" value="1"/>
</dbReference>
<dbReference type="Pfam" id="PF07679">
    <property type="entry name" value="I-set"/>
    <property type="match status" value="2"/>
</dbReference>
<dbReference type="SMART" id="SM00409">
    <property type="entry name" value="IG"/>
    <property type="match status" value="2"/>
</dbReference>
<dbReference type="SMART" id="SM00408">
    <property type="entry name" value="IGc2"/>
    <property type="match status" value="2"/>
</dbReference>
<dbReference type="SUPFAM" id="SSF48726">
    <property type="entry name" value="Immunoglobulin"/>
    <property type="match status" value="2"/>
</dbReference>
<dbReference type="PROSITE" id="PS50835">
    <property type="entry name" value="IG_LIKE"/>
    <property type="match status" value="2"/>
</dbReference>
<gene>
    <name evidence="11" type="primary">zig-2</name>
    <name evidence="11" type="ORF">F42F12.2</name>
</gene>
<reference evidence="9" key="1">
    <citation type="journal article" date="2002" name="Science">
        <title>Immunoglobulin-domain proteins required for maintenance of ventral nerve cord organization.</title>
        <authorList>
            <person name="Aurelio O."/>
            <person name="Hall D."/>
            <person name="Hobert O."/>
        </authorList>
    </citation>
    <scope>NUCLEOTIDE SEQUENCE [MRNA]</scope>
    <scope>TISSUE SPECIFICITY</scope>
    <scope>DEVELOPMENTAL STAGE</scope>
</reference>
<reference evidence="10" key="2">
    <citation type="journal article" date="1998" name="Science">
        <title>Genome sequence of the nematode C. elegans: a platform for investigating biology.</title>
        <authorList>
            <consortium name="The C. elegans sequencing consortium"/>
        </authorList>
    </citation>
    <scope>NUCLEOTIDE SEQUENCE [LARGE SCALE GENOMIC DNA]</scope>
    <source>
        <strain evidence="10">Bristol N2</strain>
    </source>
</reference>
<reference evidence="8" key="3">
    <citation type="journal article" date="2009" name="Genetics">
        <title>The small, secreted immunoglobulin protein ZIG-3 maintains axon position in Caenorhabditis elegans.</title>
        <authorList>
            <person name="Benard C."/>
            <person name="Tjoe N."/>
            <person name="Boulin T."/>
            <person name="Recio J."/>
            <person name="Hobert O."/>
        </authorList>
    </citation>
    <scope>FUNCTION</scope>
    <scope>DISRUPTION PHENOTYPE</scope>
</reference>
<reference evidence="8" key="4">
    <citation type="journal article" date="2012" name="PLoS Genet.">
        <title>The secreted immunoglobulin domain proteins ZIG-5 and ZIG-8 cooperate with L1CAM/SAX-7 to maintain nervous system integrity.</title>
        <authorList>
            <person name="Benard C.Y."/>
            <person name="Blanchette C."/>
            <person name="Recio J."/>
            <person name="Hobert O."/>
        </authorList>
    </citation>
    <scope>FUNCTION</scope>
    <scope>DISRUPTION PHENOTYPE</scope>
</reference>